<gene>
    <name evidence="6" type="primary">easD</name>
    <name type="ORF">TRV_01860</name>
</gene>
<reference key="1">
    <citation type="journal article" date="2011" name="Genome Biol.">
        <title>Comparative and functional genomics provide insights into the pathogenicity of dermatophytic fungi.</title>
        <authorList>
            <person name="Burmester A."/>
            <person name="Shelest E."/>
            <person name="Gloeckner G."/>
            <person name="Heddergott C."/>
            <person name="Schindler S."/>
            <person name="Staib P."/>
            <person name="Heidel A."/>
            <person name="Felder M."/>
            <person name="Petzold A."/>
            <person name="Szafranski K."/>
            <person name="Feuermann M."/>
            <person name="Pedruzzi I."/>
            <person name="Priebe S."/>
            <person name="Groth M."/>
            <person name="Winkler R."/>
            <person name="Li W."/>
            <person name="Kniemeyer O."/>
            <person name="Schroeckh V."/>
            <person name="Hertweck C."/>
            <person name="Hube B."/>
            <person name="White T.C."/>
            <person name="Platzer M."/>
            <person name="Guthke R."/>
            <person name="Heitman J."/>
            <person name="Woestemeyer J."/>
            <person name="Zipfel P.F."/>
            <person name="Monod M."/>
            <person name="Brakhage A.A."/>
        </authorList>
    </citation>
    <scope>NUCLEOTIDE SEQUENCE [LARGE SCALE GENOMIC DNA]</scope>
    <source>
        <strain>HKI 0517</strain>
    </source>
</reference>
<reference key="2">
    <citation type="journal article" date="2012" name="Microbiology">
        <title>Genome mining reveals the presence of a conserved gene cluster for the biosynthesis of ergot alkaloid precursors in the fungal family Arthrodermataceae.</title>
        <authorList>
            <person name="Wallwey C."/>
            <person name="Heddergott C."/>
            <person name="Xie X."/>
            <person name="Brakhage A.A."/>
            <person name="Li S.M."/>
        </authorList>
    </citation>
    <scope>FUNCTION</scope>
</reference>
<proteinExistence type="inferred from homology"/>
<comment type="function">
    <text evidence="5">Chanoclavine-I dehydrogenase; part of the gene cluster that mediates the biosynthesis of fungal ergot alkaloid (PubMed:22403186). DmaW catalyzes the first step of ergot alkaloid biosynthesis by condensing dimethylallyl diphosphate (DMAP) and tryptophan to form 4-dimethylallyl-L-tryptophan (PubMed:22403186). The second step is catalyzed by the methyltransferase easF that methylates 4-dimethylallyl-L-tryptophan in the presence of S-adenosyl-L-methionine, resulting in the formation of 4-dimethylallyl-L-abrine (PubMed:22403186). The catalase easC and the FAD-dependent oxidoreductase easE then transform 4-dimethylallyl-L-abrine to chanoclavine-I which is further oxidized by easD in the presence of NAD(+), resulting in the formation of chanoclavine-I aldehyde (PubMed:22403186). Chanoclavine-I aldehyde is the precursor of ergoamides and ergopeptines in Clavicipitaceae, and clavine-type alcaloids such as fumiclavine in Trichocomaceae (PubMed:22403186). However, the metabolites downstream of chanoclavine-I aldehyde in Arthrodermataceae have not been identified yet (PubMed:22403186).</text>
</comment>
<comment type="catalytic activity">
    <reaction evidence="1">
        <text>chanoclavine-I + NAD(+) = chanoclavine-I aldehyde + NADH + H(+)</text>
        <dbReference type="Rhea" id="RHEA:33891"/>
        <dbReference type="ChEBI" id="CHEBI:15378"/>
        <dbReference type="ChEBI" id="CHEBI:57540"/>
        <dbReference type="ChEBI" id="CHEBI:57945"/>
        <dbReference type="ChEBI" id="CHEBI:71487"/>
        <dbReference type="ChEBI" id="CHEBI:72949"/>
        <dbReference type="EC" id="1.1.1.332"/>
    </reaction>
</comment>
<comment type="pathway">
    <text evidence="8">Alkaloid biosynthesis; ergot alkaloid biosynthesis.</text>
</comment>
<comment type="subunit">
    <text evidence="1">Homotetramer.</text>
</comment>
<comment type="similarity">
    <text evidence="7">Belongs to the short-chain dehydrogenases/reductases (SDR) family.</text>
</comment>
<dbReference type="EC" id="1.1.1.332" evidence="8"/>
<dbReference type="EMBL" id="ACYE01000098">
    <property type="protein sequence ID" value="EFE43380.1"/>
    <property type="molecule type" value="Genomic_DNA"/>
</dbReference>
<dbReference type="RefSeq" id="XP_003023998.1">
    <property type="nucleotide sequence ID" value="XM_003023952.1"/>
</dbReference>
<dbReference type="SMR" id="D4D446"/>
<dbReference type="GeneID" id="9582691"/>
<dbReference type="KEGG" id="tve:TRV_01860"/>
<dbReference type="HOGENOM" id="CLU_010194_1_0_1"/>
<dbReference type="OrthoDB" id="4596at34384"/>
<dbReference type="UniPathway" id="UPA00327"/>
<dbReference type="Proteomes" id="UP000008383">
    <property type="component" value="Unassembled WGS sequence"/>
</dbReference>
<dbReference type="GO" id="GO:0016491">
    <property type="term" value="F:oxidoreductase activity"/>
    <property type="evidence" value="ECO:0007669"/>
    <property type="project" value="UniProtKB-KW"/>
</dbReference>
<dbReference type="GO" id="GO:0035835">
    <property type="term" value="P:indole alkaloid biosynthetic process"/>
    <property type="evidence" value="ECO:0007669"/>
    <property type="project" value="UniProtKB-UniPathway"/>
</dbReference>
<dbReference type="CDD" id="cd05233">
    <property type="entry name" value="SDR_c"/>
    <property type="match status" value="1"/>
</dbReference>
<dbReference type="Gene3D" id="3.40.50.720">
    <property type="entry name" value="NAD(P)-binding Rossmann-like Domain"/>
    <property type="match status" value="1"/>
</dbReference>
<dbReference type="InterPro" id="IPR036291">
    <property type="entry name" value="NAD(P)-bd_dom_sf"/>
</dbReference>
<dbReference type="InterPro" id="IPR002347">
    <property type="entry name" value="SDR_fam"/>
</dbReference>
<dbReference type="PANTHER" id="PTHR43180">
    <property type="entry name" value="3-OXOACYL-(ACYL-CARRIER-PROTEIN) REDUCTASE (AFU_ORTHOLOGUE AFUA_6G11210)"/>
    <property type="match status" value="1"/>
</dbReference>
<dbReference type="PANTHER" id="PTHR43180:SF63">
    <property type="entry name" value="DEHYDROGENASE_REDUCTASE FAMILY PROTEIN, PUTATIVE (AFU_ORTHOLOGUE AFUA_6G03520)-RELATED"/>
    <property type="match status" value="1"/>
</dbReference>
<dbReference type="Pfam" id="PF00106">
    <property type="entry name" value="adh_short"/>
    <property type="match status" value="1"/>
</dbReference>
<dbReference type="PRINTS" id="PR00081">
    <property type="entry name" value="GDHRDH"/>
</dbReference>
<dbReference type="SUPFAM" id="SSF51735">
    <property type="entry name" value="NAD(P)-binding Rossmann-fold domains"/>
    <property type="match status" value="1"/>
</dbReference>
<evidence type="ECO:0000250" key="1">
    <source>
        <dbReference type="UniProtKB" id="D4AK45"/>
    </source>
</evidence>
<evidence type="ECO:0000250" key="2">
    <source>
        <dbReference type="UniProtKB" id="L0E2Z4"/>
    </source>
</evidence>
<evidence type="ECO:0000250" key="3">
    <source>
        <dbReference type="UniProtKB" id="O93868"/>
    </source>
</evidence>
<evidence type="ECO:0000255" key="4"/>
<evidence type="ECO:0000269" key="5">
    <source>
    </source>
</evidence>
<evidence type="ECO:0000303" key="6">
    <source>
    </source>
</evidence>
<evidence type="ECO:0000305" key="7"/>
<evidence type="ECO:0000305" key="8">
    <source>
    </source>
</evidence>
<accession>D4D446</accession>
<organism>
    <name type="scientific">Trichophyton verrucosum (strain HKI 0517)</name>
    <dbReference type="NCBI Taxonomy" id="663202"/>
    <lineage>
        <taxon>Eukaryota</taxon>
        <taxon>Fungi</taxon>
        <taxon>Dikarya</taxon>
        <taxon>Ascomycota</taxon>
        <taxon>Pezizomycotina</taxon>
        <taxon>Eurotiomycetes</taxon>
        <taxon>Eurotiomycetidae</taxon>
        <taxon>Onygenales</taxon>
        <taxon>Arthrodermataceae</taxon>
        <taxon>Trichophyton</taxon>
    </lineage>
</organism>
<feature type="signal peptide" evidence="4">
    <location>
        <begin position="1"/>
        <end position="20"/>
    </location>
</feature>
<feature type="chain" id="PRO_0000439130" description="Chanoclavine-I dehydrogenase easD">
    <location>
        <begin position="21"/>
        <end position="265"/>
    </location>
</feature>
<feature type="active site" description="Proton donor" evidence="3">
    <location>
        <position position="169"/>
    </location>
</feature>
<feature type="active site" description="Lowers pKa of active site Tyr" evidence="3">
    <location>
        <position position="173"/>
    </location>
</feature>
<feature type="binding site" evidence="2">
    <location>
        <position position="18"/>
    </location>
    <ligand>
        <name>NADP(+)</name>
        <dbReference type="ChEBI" id="CHEBI:58349"/>
    </ligand>
</feature>
<feature type="binding site" evidence="2">
    <location>
        <position position="66"/>
    </location>
    <ligand>
        <name>NADP(+)</name>
        <dbReference type="ChEBI" id="CHEBI:58349"/>
    </ligand>
</feature>
<feature type="binding site" evidence="2">
    <location>
        <position position="132"/>
    </location>
    <ligand>
        <name>NADP(+)</name>
        <dbReference type="ChEBI" id="CHEBI:58349"/>
    </ligand>
</feature>
<feature type="binding site" evidence="3">
    <location>
        <position position="169"/>
    </location>
    <ligand>
        <name>NADP(+)</name>
        <dbReference type="ChEBI" id="CHEBI:58349"/>
    </ligand>
</feature>
<feature type="binding site" evidence="3">
    <location>
        <position position="173"/>
    </location>
    <ligand>
        <name>NADP(+)</name>
        <dbReference type="ChEBI" id="CHEBI:58349"/>
    </ligand>
</feature>
<feature type="binding site" evidence="2">
    <location>
        <position position="205"/>
    </location>
    <ligand>
        <name>NADP(+)</name>
        <dbReference type="ChEBI" id="CHEBI:58349"/>
    </ligand>
</feature>
<name>EASD_TRIVH</name>
<sequence length="265" mass="28601">MSFVSSKIFAITGGASGIGAATCRLLAKRGAATLCVGDLCSENMKLLEKDIKKINPDTKVHCTVLDVSSSSNVDEWIQDIITTFGDLHGAANIAGIAQGAGLRQAPTILEDDDQQWKKVFQVNLDGVLYSTRAQVRAMKEFSSTNPGDRSIVNVASIASMSHMPDVFAYGTSKAGCAYFTTFEVTLFALGYFSNIMGMLEGITRTPMLPRFVPSAKTQEEVEETYKKEGFSVIEADDVARTIVWLLSEDSRPVFGANINVGACMP</sequence>
<keyword id="KW-0017">Alkaloid metabolism</keyword>
<keyword id="KW-0521">NADP</keyword>
<keyword id="KW-0560">Oxidoreductase</keyword>
<keyword id="KW-0732">Signal</keyword>
<protein>
    <recommendedName>
        <fullName evidence="6">Chanoclavine-I dehydrogenase easD</fullName>
        <shortName evidence="7">ChaDH</shortName>
        <ecNumber evidence="8">1.1.1.332</ecNumber>
    </recommendedName>
    <alternativeName>
        <fullName evidence="6">Ergot alkaloid synthesis protein D</fullName>
    </alternativeName>
</protein>